<name>FTSY_MYCLE</name>
<keyword id="KW-1003">Cell membrane</keyword>
<keyword id="KW-0963">Cytoplasm</keyword>
<keyword id="KW-0342">GTP-binding</keyword>
<keyword id="KW-0378">Hydrolase</keyword>
<keyword id="KW-0472">Membrane</keyword>
<keyword id="KW-0547">Nucleotide-binding</keyword>
<keyword id="KW-0675">Receptor</keyword>
<keyword id="KW-1185">Reference proteome</keyword>
<accession>O33010</accession>
<protein>
    <recommendedName>
        <fullName evidence="1">Signal recognition particle receptor FtsY</fullName>
        <shortName evidence="1">SRP receptor</shortName>
        <ecNumber evidence="1">3.6.5.4</ecNumber>
    </recommendedName>
</protein>
<comment type="function">
    <text evidence="1">Involved in targeting and insertion of nascent membrane proteins into the cytoplasmic membrane. Acts as a receptor for the complex formed by the signal recognition particle (SRP) and the ribosome-nascent chain (RNC).</text>
</comment>
<comment type="catalytic activity">
    <reaction evidence="1">
        <text>GTP + H2O = GDP + phosphate + H(+)</text>
        <dbReference type="Rhea" id="RHEA:19669"/>
        <dbReference type="ChEBI" id="CHEBI:15377"/>
        <dbReference type="ChEBI" id="CHEBI:15378"/>
        <dbReference type="ChEBI" id="CHEBI:37565"/>
        <dbReference type="ChEBI" id="CHEBI:43474"/>
        <dbReference type="ChEBI" id="CHEBI:58189"/>
        <dbReference type="EC" id="3.6.5.4"/>
    </reaction>
</comment>
<comment type="subunit">
    <text evidence="1">Part of the signal recognition particle protein translocation system, which is composed of SRP and FtsY.</text>
</comment>
<comment type="subcellular location">
    <subcellularLocation>
        <location>Cell membrane</location>
        <topology>Peripheral membrane protein</topology>
        <orientation>Cytoplasmic side</orientation>
    </subcellularLocation>
    <subcellularLocation>
        <location evidence="1">Cytoplasm</location>
    </subcellularLocation>
</comment>
<comment type="similarity">
    <text evidence="1">Belongs to the GTP-binding SRP family. FtsY subfamily.</text>
</comment>
<feature type="chain" id="PRO_0000101138" description="Signal recognition particle receptor FtsY">
    <location>
        <begin position="1"/>
        <end position="430"/>
    </location>
</feature>
<feature type="region of interest" description="Disordered" evidence="2">
    <location>
        <begin position="75"/>
        <end position="95"/>
    </location>
</feature>
<feature type="binding site" evidence="1">
    <location>
        <begin position="238"/>
        <end position="245"/>
    </location>
    <ligand>
        <name>GTP</name>
        <dbReference type="ChEBI" id="CHEBI:37565"/>
    </ligand>
</feature>
<feature type="binding site" evidence="1">
    <location>
        <begin position="320"/>
        <end position="324"/>
    </location>
    <ligand>
        <name>GTP</name>
        <dbReference type="ChEBI" id="CHEBI:37565"/>
    </ligand>
</feature>
<feature type="binding site" evidence="1">
    <location>
        <begin position="382"/>
        <end position="385"/>
    </location>
    <ligand>
        <name>GTP</name>
        <dbReference type="ChEBI" id="CHEBI:37565"/>
    </ligand>
</feature>
<gene>
    <name evidence="1" type="primary">ftsY</name>
    <name type="ordered locus">ML1628</name>
    <name type="ORF">MLCB250.02</name>
</gene>
<sequence>MSEGLWIATAVAAVLVVIAALILGSVRYRRRRISLIFSSLSSGPSASDRSGSYTASSGITFSQTALPVQPADRIDTGELPAVGDDATVPRDSPRHTISDVLLPESELITSPDEPEAAVPHIDAIVPPEGRLDRLRGRLARTQNAFGRSILGLIVGGDLDEDSWQELEDTLLVADLGPVATESVMSALRSRLLNSNVHTESDARTMLRDVLISELQPDMDRSIRALPHADHPAVLLIVGVNGTGKTTTVGKLARVLVADGRRVVLGAADTFRAAAADQLQTWASRVGAELVRGVEGADPASVAFDAVDKGIGAGADVVVIDTAGRLHTKVGLMDELDKIKRVVTRRAAVDEVLLVLDATIGQNGLTQVRVFAEVVDITGAVLTKLDGTAKGGIVFRIQRELGVPVKLVGLGEGPDDLAPFEPAVFVDALLE</sequence>
<evidence type="ECO:0000255" key="1">
    <source>
        <dbReference type="HAMAP-Rule" id="MF_00920"/>
    </source>
</evidence>
<evidence type="ECO:0000256" key="2">
    <source>
        <dbReference type="SAM" id="MobiDB-lite"/>
    </source>
</evidence>
<proteinExistence type="inferred from homology"/>
<reference key="1">
    <citation type="journal article" date="2001" name="Nature">
        <title>Massive gene decay in the leprosy bacillus.</title>
        <authorList>
            <person name="Cole S.T."/>
            <person name="Eiglmeier K."/>
            <person name="Parkhill J."/>
            <person name="James K.D."/>
            <person name="Thomson N.R."/>
            <person name="Wheeler P.R."/>
            <person name="Honore N."/>
            <person name="Garnier T."/>
            <person name="Churcher C.M."/>
            <person name="Harris D.E."/>
            <person name="Mungall K.L."/>
            <person name="Basham D."/>
            <person name="Brown D."/>
            <person name="Chillingworth T."/>
            <person name="Connor R."/>
            <person name="Davies R.M."/>
            <person name="Devlin K."/>
            <person name="Duthoy S."/>
            <person name="Feltwell T."/>
            <person name="Fraser A."/>
            <person name="Hamlin N."/>
            <person name="Holroyd S."/>
            <person name="Hornsby T."/>
            <person name="Jagels K."/>
            <person name="Lacroix C."/>
            <person name="Maclean J."/>
            <person name="Moule S."/>
            <person name="Murphy L.D."/>
            <person name="Oliver K."/>
            <person name="Quail M.A."/>
            <person name="Rajandream M.A."/>
            <person name="Rutherford K.M."/>
            <person name="Rutter S."/>
            <person name="Seeger K."/>
            <person name="Simon S."/>
            <person name="Simmonds M."/>
            <person name="Skelton J."/>
            <person name="Squares R."/>
            <person name="Squares S."/>
            <person name="Stevens K."/>
            <person name="Taylor K."/>
            <person name="Whitehead S."/>
            <person name="Woodward J.R."/>
            <person name="Barrell B.G."/>
        </authorList>
    </citation>
    <scope>NUCLEOTIDE SEQUENCE [LARGE SCALE GENOMIC DNA]</scope>
    <source>
        <strain>TN</strain>
    </source>
</reference>
<organism>
    <name type="scientific">Mycobacterium leprae (strain TN)</name>
    <dbReference type="NCBI Taxonomy" id="272631"/>
    <lineage>
        <taxon>Bacteria</taxon>
        <taxon>Bacillati</taxon>
        <taxon>Actinomycetota</taxon>
        <taxon>Actinomycetes</taxon>
        <taxon>Mycobacteriales</taxon>
        <taxon>Mycobacteriaceae</taxon>
        <taxon>Mycobacterium</taxon>
    </lineage>
</organism>
<dbReference type="EC" id="3.6.5.4" evidence="1"/>
<dbReference type="EMBL" id="Z97369">
    <property type="protein sequence ID" value="CAB10596.1"/>
    <property type="molecule type" value="Genomic_DNA"/>
</dbReference>
<dbReference type="EMBL" id="AL583922">
    <property type="protein sequence ID" value="CAC30579.1"/>
    <property type="molecule type" value="Genomic_DNA"/>
</dbReference>
<dbReference type="PIR" id="F87112">
    <property type="entry name" value="F87112"/>
</dbReference>
<dbReference type="RefSeq" id="NP_302120.1">
    <property type="nucleotide sequence ID" value="NC_002677.1"/>
</dbReference>
<dbReference type="RefSeq" id="WP_010908441.1">
    <property type="nucleotide sequence ID" value="NC_002677.1"/>
</dbReference>
<dbReference type="SMR" id="O33010"/>
<dbReference type="STRING" id="272631.gene:17575469"/>
<dbReference type="KEGG" id="mle:ML1628"/>
<dbReference type="PATRIC" id="fig|272631.5.peg.3069"/>
<dbReference type="Leproma" id="ML1628"/>
<dbReference type="eggNOG" id="COG0552">
    <property type="taxonomic scope" value="Bacteria"/>
</dbReference>
<dbReference type="HOGENOM" id="CLU_009301_1_3_11"/>
<dbReference type="OrthoDB" id="9804720at2"/>
<dbReference type="Proteomes" id="UP000000806">
    <property type="component" value="Chromosome"/>
</dbReference>
<dbReference type="GO" id="GO:0005737">
    <property type="term" value="C:cytoplasm"/>
    <property type="evidence" value="ECO:0007669"/>
    <property type="project" value="UniProtKB-SubCell"/>
</dbReference>
<dbReference type="GO" id="GO:0005886">
    <property type="term" value="C:plasma membrane"/>
    <property type="evidence" value="ECO:0007669"/>
    <property type="project" value="UniProtKB-SubCell"/>
</dbReference>
<dbReference type="GO" id="GO:0016887">
    <property type="term" value="F:ATP hydrolysis activity"/>
    <property type="evidence" value="ECO:0007669"/>
    <property type="project" value="InterPro"/>
</dbReference>
<dbReference type="GO" id="GO:0005525">
    <property type="term" value="F:GTP binding"/>
    <property type="evidence" value="ECO:0007669"/>
    <property type="project" value="UniProtKB-UniRule"/>
</dbReference>
<dbReference type="GO" id="GO:0003924">
    <property type="term" value="F:GTPase activity"/>
    <property type="evidence" value="ECO:0007669"/>
    <property type="project" value="UniProtKB-UniRule"/>
</dbReference>
<dbReference type="GO" id="GO:0005047">
    <property type="term" value="F:signal recognition particle binding"/>
    <property type="evidence" value="ECO:0007669"/>
    <property type="project" value="TreeGrafter"/>
</dbReference>
<dbReference type="GO" id="GO:0006614">
    <property type="term" value="P:SRP-dependent cotranslational protein targeting to membrane"/>
    <property type="evidence" value="ECO:0007669"/>
    <property type="project" value="InterPro"/>
</dbReference>
<dbReference type="FunFam" id="1.20.120.140:FF:000002">
    <property type="entry name" value="Signal recognition particle receptor FtsY"/>
    <property type="match status" value="1"/>
</dbReference>
<dbReference type="FunFam" id="3.40.50.300:FF:000053">
    <property type="entry name" value="Signal recognition particle receptor FtsY"/>
    <property type="match status" value="1"/>
</dbReference>
<dbReference type="Gene3D" id="3.40.50.300">
    <property type="entry name" value="P-loop containing nucleotide triphosphate hydrolases"/>
    <property type="match status" value="1"/>
</dbReference>
<dbReference type="Gene3D" id="1.20.120.140">
    <property type="entry name" value="Signal recognition particle SRP54, nucleotide-binding domain"/>
    <property type="match status" value="1"/>
</dbReference>
<dbReference type="HAMAP" id="MF_00920">
    <property type="entry name" value="FtsY"/>
    <property type="match status" value="1"/>
</dbReference>
<dbReference type="InterPro" id="IPR003593">
    <property type="entry name" value="AAA+_ATPase"/>
</dbReference>
<dbReference type="InterPro" id="IPR027417">
    <property type="entry name" value="P-loop_NTPase"/>
</dbReference>
<dbReference type="InterPro" id="IPR013822">
    <property type="entry name" value="Signal_recog_particl_SRP54_hlx"/>
</dbReference>
<dbReference type="InterPro" id="IPR004390">
    <property type="entry name" value="SR_rcpt_FtsY"/>
</dbReference>
<dbReference type="InterPro" id="IPR036225">
    <property type="entry name" value="SRP/SRP_N"/>
</dbReference>
<dbReference type="InterPro" id="IPR000897">
    <property type="entry name" value="SRP54_GTPase_dom"/>
</dbReference>
<dbReference type="InterPro" id="IPR042101">
    <property type="entry name" value="SRP54_N_sf"/>
</dbReference>
<dbReference type="NCBIfam" id="TIGR00064">
    <property type="entry name" value="ftsY"/>
    <property type="match status" value="1"/>
</dbReference>
<dbReference type="PANTHER" id="PTHR43134">
    <property type="entry name" value="SIGNAL RECOGNITION PARTICLE RECEPTOR SUBUNIT ALPHA"/>
    <property type="match status" value="1"/>
</dbReference>
<dbReference type="PANTHER" id="PTHR43134:SF1">
    <property type="entry name" value="SIGNAL RECOGNITION PARTICLE RECEPTOR SUBUNIT ALPHA"/>
    <property type="match status" value="1"/>
</dbReference>
<dbReference type="Pfam" id="PF00448">
    <property type="entry name" value="SRP54"/>
    <property type="match status" value="1"/>
</dbReference>
<dbReference type="Pfam" id="PF02881">
    <property type="entry name" value="SRP54_N"/>
    <property type="match status" value="1"/>
</dbReference>
<dbReference type="SMART" id="SM00382">
    <property type="entry name" value="AAA"/>
    <property type="match status" value="1"/>
</dbReference>
<dbReference type="SMART" id="SM00962">
    <property type="entry name" value="SRP54"/>
    <property type="match status" value="1"/>
</dbReference>
<dbReference type="SMART" id="SM00963">
    <property type="entry name" value="SRP54_N"/>
    <property type="match status" value="1"/>
</dbReference>
<dbReference type="SUPFAM" id="SSF47364">
    <property type="entry name" value="Domain of the SRP/SRP receptor G-proteins"/>
    <property type="match status" value="1"/>
</dbReference>
<dbReference type="SUPFAM" id="SSF52540">
    <property type="entry name" value="P-loop containing nucleoside triphosphate hydrolases"/>
    <property type="match status" value="1"/>
</dbReference>
<dbReference type="PROSITE" id="PS00300">
    <property type="entry name" value="SRP54"/>
    <property type="match status" value="1"/>
</dbReference>